<gene>
    <name type="ordered locus">CJE0614</name>
</gene>
<protein>
    <recommendedName>
        <fullName evidence="1">Nucleoside triphosphate pyrophosphatase</fullName>
        <ecNumber evidence="1">3.6.1.9</ecNumber>
    </recommendedName>
    <alternativeName>
        <fullName evidence="1">Nucleotide pyrophosphatase</fullName>
        <shortName evidence="1">Nucleotide PPase</shortName>
    </alternativeName>
</protein>
<comment type="function">
    <text evidence="1">Nucleoside triphosphate pyrophosphatase. May have a dual role in cell division arrest and in preventing the incorporation of modified nucleotides into cellular nucleic acids.</text>
</comment>
<comment type="catalytic activity">
    <reaction evidence="1">
        <text>a ribonucleoside 5'-triphosphate + H2O = a ribonucleoside 5'-phosphate + diphosphate + H(+)</text>
        <dbReference type="Rhea" id="RHEA:23996"/>
        <dbReference type="ChEBI" id="CHEBI:15377"/>
        <dbReference type="ChEBI" id="CHEBI:15378"/>
        <dbReference type="ChEBI" id="CHEBI:33019"/>
        <dbReference type="ChEBI" id="CHEBI:58043"/>
        <dbReference type="ChEBI" id="CHEBI:61557"/>
        <dbReference type="EC" id="3.6.1.9"/>
    </reaction>
</comment>
<comment type="catalytic activity">
    <reaction evidence="1">
        <text>a 2'-deoxyribonucleoside 5'-triphosphate + H2O = a 2'-deoxyribonucleoside 5'-phosphate + diphosphate + H(+)</text>
        <dbReference type="Rhea" id="RHEA:44644"/>
        <dbReference type="ChEBI" id="CHEBI:15377"/>
        <dbReference type="ChEBI" id="CHEBI:15378"/>
        <dbReference type="ChEBI" id="CHEBI:33019"/>
        <dbReference type="ChEBI" id="CHEBI:61560"/>
        <dbReference type="ChEBI" id="CHEBI:65317"/>
        <dbReference type="EC" id="3.6.1.9"/>
    </reaction>
</comment>
<comment type="cofactor">
    <cofactor evidence="1">
        <name>a divalent metal cation</name>
        <dbReference type="ChEBI" id="CHEBI:60240"/>
    </cofactor>
</comment>
<comment type="subcellular location">
    <subcellularLocation>
        <location evidence="1">Cytoplasm</location>
    </subcellularLocation>
</comment>
<comment type="similarity">
    <text evidence="1">Belongs to the Maf family.</text>
</comment>
<evidence type="ECO:0000255" key="1">
    <source>
        <dbReference type="HAMAP-Rule" id="MF_00528"/>
    </source>
</evidence>
<sequence>MLILASSSISRANLLKTAKIDFRQVSFDYDENLNKNISPFLYVQKIVLEKERQFLSTLGKDFQNQNLLFADSIVCIDEKILTKAKDKKEAYEMLALQNGKYASILSAFLLVKPEKRVFSLSKTTLYFKNFDENALRDYVENDLYKGKAGCIMCEGFHQNFITQQVGNLSTALGLDIQTLKAYL</sequence>
<proteinExistence type="inferred from homology"/>
<feature type="chain" id="PRO_0000267277" description="Nucleoside triphosphate pyrophosphatase">
    <location>
        <begin position="1"/>
        <end position="183"/>
    </location>
</feature>
<feature type="active site" description="Proton acceptor" evidence="1">
    <location>
        <position position="71"/>
    </location>
</feature>
<name>NTPP_CAMJR</name>
<reference key="1">
    <citation type="journal article" date="2005" name="PLoS Biol.">
        <title>Major structural differences and novel potential virulence mechanisms from the genomes of multiple Campylobacter species.</title>
        <authorList>
            <person name="Fouts D.E."/>
            <person name="Mongodin E.F."/>
            <person name="Mandrell R.E."/>
            <person name="Miller W.G."/>
            <person name="Rasko D.A."/>
            <person name="Ravel J."/>
            <person name="Brinkac L.M."/>
            <person name="DeBoy R.T."/>
            <person name="Parker C.T."/>
            <person name="Daugherty S.C."/>
            <person name="Dodson R.J."/>
            <person name="Durkin A.S."/>
            <person name="Madupu R."/>
            <person name="Sullivan S.A."/>
            <person name="Shetty J.U."/>
            <person name="Ayodeji M.A."/>
            <person name="Shvartsbeyn A."/>
            <person name="Schatz M.C."/>
            <person name="Badger J.H."/>
            <person name="Fraser C.M."/>
            <person name="Nelson K.E."/>
        </authorList>
    </citation>
    <scope>NUCLEOTIDE SEQUENCE [LARGE SCALE GENOMIC DNA]</scope>
    <source>
        <strain>RM1221</strain>
    </source>
</reference>
<keyword id="KW-0963">Cytoplasm</keyword>
<keyword id="KW-0378">Hydrolase</keyword>
<keyword id="KW-0546">Nucleotide metabolism</keyword>
<accession>Q5HVQ6</accession>
<organism>
    <name type="scientific">Campylobacter jejuni (strain RM1221)</name>
    <dbReference type="NCBI Taxonomy" id="195099"/>
    <lineage>
        <taxon>Bacteria</taxon>
        <taxon>Pseudomonadati</taxon>
        <taxon>Campylobacterota</taxon>
        <taxon>Epsilonproteobacteria</taxon>
        <taxon>Campylobacterales</taxon>
        <taxon>Campylobacteraceae</taxon>
        <taxon>Campylobacter</taxon>
    </lineage>
</organism>
<dbReference type="EC" id="3.6.1.9" evidence="1"/>
<dbReference type="EMBL" id="CP000025">
    <property type="protein sequence ID" value="AAW35873.1"/>
    <property type="molecule type" value="Genomic_DNA"/>
</dbReference>
<dbReference type="SMR" id="Q5HVQ6"/>
<dbReference type="KEGG" id="cjr:CJE0614"/>
<dbReference type="HOGENOM" id="CLU_040416_2_2_7"/>
<dbReference type="GO" id="GO:0005737">
    <property type="term" value="C:cytoplasm"/>
    <property type="evidence" value="ECO:0007669"/>
    <property type="project" value="UniProtKB-SubCell"/>
</dbReference>
<dbReference type="GO" id="GO:0047429">
    <property type="term" value="F:nucleoside triphosphate diphosphatase activity"/>
    <property type="evidence" value="ECO:0007669"/>
    <property type="project" value="UniProtKB-EC"/>
</dbReference>
<dbReference type="GO" id="GO:0009117">
    <property type="term" value="P:nucleotide metabolic process"/>
    <property type="evidence" value="ECO:0007669"/>
    <property type="project" value="UniProtKB-KW"/>
</dbReference>
<dbReference type="CDD" id="cd00555">
    <property type="entry name" value="Maf"/>
    <property type="match status" value="1"/>
</dbReference>
<dbReference type="Gene3D" id="3.90.950.10">
    <property type="match status" value="1"/>
</dbReference>
<dbReference type="HAMAP" id="MF_00528">
    <property type="entry name" value="Maf"/>
    <property type="match status" value="1"/>
</dbReference>
<dbReference type="InterPro" id="IPR029001">
    <property type="entry name" value="ITPase-like_fam"/>
</dbReference>
<dbReference type="InterPro" id="IPR003697">
    <property type="entry name" value="Maf-like"/>
</dbReference>
<dbReference type="NCBIfam" id="TIGR00172">
    <property type="entry name" value="maf"/>
    <property type="match status" value="1"/>
</dbReference>
<dbReference type="NCBIfam" id="NF003141">
    <property type="entry name" value="PRK04056.1"/>
    <property type="match status" value="1"/>
</dbReference>
<dbReference type="PANTHER" id="PTHR43213">
    <property type="entry name" value="BIFUNCTIONAL DTTP/UTP PYROPHOSPHATASE/METHYLTRANSFERASE PROTEIN-RELATED"/>
    <property type="match status" value="1"/>
</dbReference>
<dbReference type="PANTHER" id="PTHR43213:SF5">
    <property type="entry name" value="BIFUNCTIONAL DTTP_UTP PYROPHOSPHATASE_METHYLTRANSFERASE PROTEIN-RELATED"/>
    <property type="match status" value="1"/>
</dbReference>
<dbReference type="Pfam" id="PF02545">
    <property type="entry name" value="Maf"/>
    <property type="match status" value="1"/>
</dbReference>
<dbReference type="PIRSF" id="PIRSF006305">
    <property type="entry name" value="Maf"/>
    <property type="match status" value="1"/>
</dbReference>
<dbReference type="SUPFAM" id="SSF52972">
    <property type="entry name" value="ITPase-like"/>
    <property type="match status" value="1"/>
</dbReference>